<reference key="1">
    <citation type="submission" date="2008-01" db="EMBL/GenBank/DDBJ databases">
        <title>Complete sequence of chromosome of Caulobacter sp. K31.</title>
        <authorList>
            <consortium name="US DOE Joint Genome Institute"/>
            <person name="Copeland A."/>
            <person name="Lucas S."/>
            <person name="Lapidus A."/>
            <person name="Barry K."/>
            <person name="Glavina del Rio T."/>
            <person name="Dalin E."/>
            <person name="Tice H."/>
            <person name="Pitluck S."/>
            <person name="Bruce D."/>
            <person name="Goodwin L."/>
            <person name="Thompson L.S."/>
            <person name="Brettin T."/>
            <person name="Detter J.C."/>
            <person name="Han C."/>
            <person name="Schmutz J."/>
            <person name="Larimer F."/>
            <person name="Land M."/>
            <person name="Hauser L."/>
            <person name="Kyrpides N."/>
            <person name="Kim E."/>
            <person name="Stephens C."/>
            <person name="Richardson P."/>
        </authorList>
    </citation>
    <scope>NUCLEOTIDE SEQUENCE [LARGE SCALE GENOMIC DNA]</scope>
    <source>
        <strain>K31</strain>
    </source>
</reference>
<protein>
    <recommendedName>
        <fullName evidence="1">Nucleoside diphosphate kinase</fullName>
        <shortName evidence="1">NDK</shortName>
        <shortName evidence="1">NDP kinase</shortName>
        <ecNumber evidence="1">2.7.4.6</ecNumber>
    </recommendedName>
    <alternativeName>
        <fullName evidence="1">Nucleoside-2-P kinase</fullName>
    </alternativeName>
</protein>
<feature type="chain" id="PRO_1000080956" description="Nucleoside diphosphate kinase">
    <location>
        <begin position="1"/>
        <end position="139"/>
    </location>
</feature>
<feature type="active site" description="Pros-phosphohistidine intermediate" evidence="1">
    <location>
        <position position="116"/>
    </location>
</feature>
<feature type="binding site" evidence="1">
    <location>
        <position position="10"/>
    </location>
    <ligand>
        <name>ATP</name>
        <dbReference type="ChEBI" id="CHEBI:30616"/>
    </ligand>
</feature>
<feature type="binding site" evidence="1">
    <location>
        <position position="58"/>
    </location>
    <ligand>
        <name>ATP</name>
        <dbReference type="ChEBI" id="CHEBI:30616"/>
    </ligand>
</feature>
<feature type="binding site" evidence="1">
    <location>
        <position position="86"/>
    </location>
    <ligand>
        <name>ATP</name>
        <dbReference type="ChEBI" id="CHEBI:30616"/>
    </ligand>
</feature>
<feature type="binding site" evidence="1">
    <location>
        <position position="92"/>
    </location>
    <ligand>
        <name>ATP</name>
        <dbReference type="ChEBI" id="CHEBI:30616"/>
    </ligand>
</feature>
<feature type="binding site" evidence="1">
    <location>
        <position position="103"/>
    </location>
    <ligand>
        <name>ATP</name>
        <dbReference type="ChEBI" id="CHEBI:30616"/>
    </ligand>
</feature>
<feature type="binding site" evidence="1">
    <location>
        <position position="113"/>
    </location>
    <ligand>
        <name>ATP</name>
        <dbReference type="ChEBI" id="CHEBI:30616"/>
    </ligand>
</feature>
<organism>
    <name type="scientific">Caulobacter sp. (strain K31)</name>
    <dbReference type="NCBI Taxonomy" id="366602"/>
    <lineage>
        <taxon>Bacteria</taxon>
        <taxon>Pseudomonadati</taxon>
        <taxon>Pseudomonadota</taxon>
        <taxon>Alphaproteobacteria</taxon>
        <taxon>Caulobacterales</taxon>
        <taxon>Caulobacteraceae</taxon>
        <taxon>Caulobacter</taxon>
    </lineage>
</organism>
<proteinExistence type="inferred from homology"/>
<dbReference type="EC" id="2.7.4.6" evidence="1"/>
<dbReference type="EMBL" id="CP000927">
    <property type="protein sequence ID" value="ABZ71665.1"/>
    <property type="molecule type" value="Genomic_DNA"/>
</dbReference>
<dbReference type="SMR" id="B0SWN7"/>
<dbReference type="STRING" id="366602.Caul_2538"/>
<dbReference type="KEGG" id="cak:Caul_2538"/>
<dbReference type="eggNOG" id="COG0105">
    <property type="taxonomic scope" value="Bacteria"/>
</dbReference>
<dbReference type="HOGENOM" id="CLU_060216_8_1_5"/>
<dbReference type="OrthoDB" id="9801161at2"/>
<dbReference type="GO" id="GO:0005737">
    <property type="term" value="C:cytoplasm"/>
    <property type="evidence" value="ECO:0007669"/>
    <property type="project" value="UniProtKB-SubCell"/>
</dbReference>
<dbReference type="GO" id="GO:0005524">
    <property type="term" value="F:ATP binding"/>
    <property type="evidence" value="ECO:0007669"/>
    <property type="project" value="UniProtKB-UniRule"/>
</dbReference>
<dbReference type="GO" id="GO:0046872">
    <property type="term" value="F:metal ion binding"/>
    <property type="evidence" value="ECO:0007669"/>
    <property type="project" value="UniProtKB-KW"/>
</dbReference>
<dbReference type="GO" id="GO:0004550">
    <property type="term" value="F:nucleoside diphosphate kinase activity"/>
    <property type="evidence" value="ECO:0007669"/>
    <property type="project" value="UniProtKB-UniRule"/>
</dbReference>
<dbReference type="GO" id="GO:0006241">
    <property type="term" value="P:CTP biosynthetic process"/>
    <property type="evidence" value="ECO:0007669"/>
    <property type="project" value="UniProtKB-UniRule"/>
</dbReference>
<dbReference type="GO" id="GO:0006183">
    <property type="term" value="P:GTP biosynthetic process"/>
    <property type="evidence" value="ECO:0007669"/>
    <property type="project" value="UniProtKB-UniRule"/>
</dbReference>
<dbReference type="GO" id="GO:0006228">
    <property type="term" value="P:UTP biosynthetic process"/>
    <property type="evidence" value="ECO:0007669"/>
    <property type="project" value="UniProtKB-UniRule"/>
</dbReference>
<dbReference type="CDD" id="cd04413">
    <property type="entry name" value="NDPk_I"/>
    <property type="match status" value="1"/>
</dbReference>
<dbReference type="FunFam" id="3.30.70.141:FF:000039">
    <property type="entry name" value="Nucleoside diphosphate kinase B"/>
    <property type="match status" value="1"/>
</dbReference>
<dbReference type="Gene3D" id="3.30.70.141">
    <property type="entry name" value="Nucleoside diphosphate kinase-like domain"/>
    <property type="match status" value="1"/>
</dbReference>
<dbReference type="HAMAP" id="MF_00451">
    <property type="entry name" value="NDP_kinase"/>
    <property type="match status" value="1"/>
</dbReference>
<dbReference type="InterPro" id="IPR034907">
    <property type="entry name" value="NDK-like_dom"/>
</dbReference>
<dbReference type="InterPro" id="IPR036850">
    <property type="entry name" value="NDK-like_dom_sf"/>
</dbReference>
<dbReference type="InterPro" id="IPR001564">
    <property type="entry name" value="Nucleoside_diP_kinase"/>
</dbReference>
<dbReference type="InterPro" id="IPR023005">
    <property type="entry name" value="Nucleoside_diP_kinase_AS"/>
</dbReference>
<dbReference type="NCBIfam" id="NF001908">
    <property type="entry name" value="PRK00668.1"/>
    <property type="match status" value="1"/>
</dbReference>
<dbReference type="PANTHER" id="PTHR46161">
    <property type="entry name" value="NUCLEOSIDE DIPHOSPHATE KINASE"/>
    <property type="match status" value="1"/>
</dbReference>
<dbReference type="PANTHER" id="PTHR46161:SF3">
    <property type="entry name" value="NUCLEOSIDE DIPHOSPHATE KINASE DDB_G0292928-RELATED"/>
    <property type="match status" value="1"/>
</dbReference>
<dbReference type="Pfam" id="PF00334">
    <property type="entry name" value="NDK"/>
    <property type="match status" value="1"/>
</dbReference>
<dbReference type="PRINTS" id="PR01243">
    <property type="entry name" value="NUCDPKINASE"/>
</dbReference>
<dbReference type="SMART" id="SM00562">
    <property type="entry name" value="NDK"/>
    <property type="match status" value="1"/>
</dbReference>
<dbReference type="SUPFAM" id="SSF54919">
    <property type="entry name" value="Nucleoside diphosphate kinase, NDK"/>
    <property type="match status" value="1"/>
</dbReference>
<dbReference type="PROSITE" id="PS00469">
    <property type="entry name" value="NDPK"/>
    <property type="match status" value="1"/>
</dbReference>
<dbReference type="PROSITE" id="PS51374">
    <property type="entry name" value="NDPK_LIKE"/>
    <property type="match status" value="1"/>
</dbReference>
<evidence type="ECO:0000255" key="1">
    <source>
        <dbReference type="HAMAP-Rule" id="MF_00451"/>
    </source>
</evidence>
<sequence>MTERTFSIIKPDATRRNLTGKINAVIEEAGLRIVAQRRVKLTDAQAKKFYEVHAERPFYGELVAQMTAEPVVVQVLEGDNAVLKYREVMGATNPDNADEGTIRKLFALSIGENSVHGSDSLENAAIEIAQFFKDEDIVG</sequence>
<keyword id="KW-0067">ATP-binding</keyword>
<keyword id="KW-0963">Cytoplasm</keyword>
<keyword id="KW-0418">Kinase</keyword>
<keyword id="KW-0460">Magnesium</keyword>
<keyword id="KW-0479">Metal-binding</keyword>
<keyword id="KW-0546">Nucleotide metabolism</keyword>
<keyword id="KW-0547">Nucleotide-binding</keyword>
<keyword id="KW-0597">Phosphoprotein</keyword>
<keyword id="KW-0808">Transferase</keyword>
<accession>B0SWN7</accession>
<name>NDK_CAUSK</name>
<gene>
    <name evidence="1" type="primary">ndk</name>
    <name type="ordered locus">Caul_2538</name>
</gene>
<comment type="function">
    <text evidence="1">Major role in the synthesis of nucleoside triphosphates other than ATP. The ATP gamma phosphate is transferred to the NDP beta phosphate via a ping-pong mechanism, using a phosphorylated active-site intermediate.</text>
</comment>
<comment type="catalytic activity">
    <reaction evidence="1">
        <text>a 2'-deoxyribonucleoside 5'-diphosphate + ATP = a 2'-deoxyribonucleoside 5'-triphosphate + ADP</text>
        <dbReference type="Rhea" id="RHEA:44640"/>
        <dbReference type="ChEBI" id="CHEBI:30616"/>
        <dbReference type="ChEBI" id="CHEBI:61560"/>
        <dbReference type="ChEBI" id="CHEBI:73316"/>
        <dbReference type="ChEBI" id="CHEBI:456216"/>
        <dbReference type="EC" id="2.7.4.6"/>
    </reaction>
</comment>
<comment type="catalytic activity">
    <reaction evidence="1">
        <text>a ribonucleoside 5'-diphosphate + ATP = a ribonucleoside 5'-triphosphate + ADP</text>
        <dbReference type="Rhea" id="RHEA:18113"/>
        <dbReference type="ChEBI" id="CHEBI:30616"/>
        <dbReference type="ChEBI" id="CHEBI:57930"/>
        <dbReference type="ChEBI" id="CHEBI:61557"/>
        <dbReference type="ChEBI" id="CHEBI:456216"/>
        <dbReference type="EC" id="2.7.4.6"/>
    </reaction>
</comment>
<comment type="cofactor">
    <cofactor evidence="1">
        <name>Mg(2+)</name>
        <dbReference type="ChEBI" id="CHEBI:18420"/>
    </cofactor>
</comment>
<comment type="subunit">
    <text evidence="1">Homotetramer.</text>
</comment>
<comment type="subcellular location">
    <subcellularLocation>
        <location evidence="1">Cytoplasm</location>
    </subcellularLocation>
</comment>
<comment type="similarity">
    <text evidence="1">Belongs to the NDK family.</text>
</comment>